<name>LGT_ENTFA</name>
<accession>Q834C0</accession>
<reference key="1">
    <citation type="journal article" date="2003" name="Science">
        <title>Role of mobile DNA in the evolution of vancomycin-resistant Enterococcus faecalis.</title>
        <authorList>
            <person name="Paulsen I.T."/>
            <person name="Banerjei L."/>
            <person name="Myers G.S.A."/>
            <person name="Nelson K.E."/>
            <person name="Seshadri R."/>
            <person name="Read T.D."/>
            <person name="Fouts D.E."/>
            <person name="Eisen J.A."/>
            <person name="Gill S.R."/>
            <person name="Heidelberg J.F."/>
            <person name="Tettelin H."/>
            <person name="Dodson R.J."/>
            <person name="Umayam L.A."/>
            <person name="Brinkac L.M."/>
            <person name="Beanan M.J."/>
            <person name="Daugherty S.C."/>
            <person name="DeBoy R.T."/>
            <person name="Durkin S.A."/>
            <person name="Kolonay J.F."/>
            <person name="Madupu R."/>
            <person name="Nelson W.C."/>
            <person name="Vamathevan J.J."/>
            <person name="Tran B."/>
            <person name="Upton J."/>
            <person name="Hansen T."/>
            <person name="Shetty J."/>
            <person name="Khouri H.M."/>
            <person name="Utterback T.R."/>
            <person name="Radune D."/>
            <person name="Ketchum K.A."/>
            <person name="Dougherty B.A."/>
            <person name="Fraser C.M."/>
        </authorList>
    </citation>
    <scope>NUCLEOTIDE SEQUENCE [LARGE SCALE GENOMIC DNA]</scope>
    <source>
        <strain>ATCC 700802 / V583</strain>
    </source>
</reference>
<comment type="function">
    <text evidence="1">Catalyzes the transfer of the diacylglyceryl group from phosphatidylglycerol to the sulfhydryl group of the N-terminal cysteine of a prolipoprotein, the first step in the formation of mature lipoproteins.</text>
</comment>
<comment type="catalytic activity">
    <reaction evidence="1">
        <text>L-cysteinyl-[prolipoprotein] + a 1,2-diacyl-sn-glycero-3-phospho-(1'-sn-glycerol) = an S-1,2-diacyl-sn-glyceryl-L-cysteinyl-[prolipoprotein] + sn-glycerol 1-phosphate + H(+)</text>
        <dbReference type="Rhea" id="RHEA:56712"/>
        <dbReference type="Rhea" id="RHEA-COMP:14679"/>
        <dbReference type="Rhea" id="RHEA-COMP:14680"/>
        <dbReference type="ChEBI" id="CHEBI:15378"/>
        <dbReference type="ChEBI" id="CHEBI:29950"/>
        <dbReference type="ChEBI" id="CHEBI:57685"/>
        <dbReference type="ChEBI" id="CHEBI:64716"/>
        <dbReference type="ChEBI" id="CHEBI:140658"/>
        <dbReference type="EC" id="2.5.1.145"/>
    </reaction>
</comment>
<comment type="pathway">
    <text evidence="1">Protein modification; lipoprotein biosynthesis (diacylglyceryl transfer).</text>
</comment>
<comment type="subcellular location">
    <subcellularLocation>
        <location evidence="1">Cell membrane</location>
        <topology evidence="1">Multi-pass membrane protein</topology>
    </subcellularLocation>
</comment>
<comment type="similarity">
    <text evidence="1">Belongs to the Lgt family.</text>
</comment>
<protein>
    <recommendedName>
        <fullName evidence="1">Phosphatidylglycerol--prolipoprotein diacylglyceryl transferase</fullName>
        <ecNumber evidence="1">2.5.1.145</ecNumber>
    </recommendedName>
</protein>
<gene>
    <name evidence="1" type="primary">lgt</name>
    <name type="ordered locus">EF_1748</name>
</gene>
<sequence>MMLAQVNSIAFRLFGIPVYWYAIIIVSGIALAVWLSSREAVRVGLKEDDVFDFMLWGLPAAIVGARLYYVAFQWQDYVDNPIEIFFTRNGGLAIYGGLIGGGLALFFFTRHRFISTWTFLDIAAPSVILAQAIGRWGNFMNHEAYGPATTRQFLENLHLPTFIIDNMNINGTYHQPTFLYESVWNVLGFIVLVLLRKKPHFLKEGEVFLGYIIWYSFGRFFIEGLRMDSLYAFSNIRVSQLLSLVMFVAAIVIVIVRRRNPNLKFYNREKQKKKITTS</sequence>
<organism>
    <name type="scientific">Enterococcus faecalis (strain ATCC 700802 / V583)</name>
    <dbReference type="NCBI Taxonomy" id="226185"/>
    <lineage>
        <taxon>Bacteria</taxon>
        <taxon>Bacillati</taxon>
        <taxon>Bacillota</taxon>
        <taxon>Bacilli</taxon>
        <taxon>Lactobacillales</taxon>
        <taxon>Enterococcaceae</taxon>
        <taxon>Enterococcus</taxon>
    </lineage>
</organism>
<dbReference type="EC" id="2.5.1.145" evidence="1"/>
<dbReference type="EMBL" id="AE016830">
    <property type="protein sequence ID" value="AAO81521.1"/>
    <property type="molecule type" value="Genomic_DNA"/>
</dbReference>
<dbReference type="RefSeq" id="NP_815451.1">
    <property type="nucleotide sequence ID" value="NC_004668.1"/>
</dbReference>
<dbReference type="SMR" id="Q834C0"/>
<dbReference type="STRING" id="226185.EF_1748"/>
<dbReference type="EnsemblBacteria" id="AAO81521">
    <property type="protein sequence ID" value="AAO81521"/>
    <property type="gene ID" value="EF_1748"/>
</dbReference>
<dbReference type="KEGG" id="efa:EF1748"/>
<dbReference type="PATRIC" id="fig|226185.45.peg.1767"/>
<dbReference type="eggNOG" id="COG0682">
    <property type="taxonomic scope" value="Bacteria"/>
</dbReference>
<dbReference type="HOGENOM" id="CLU_013386_0_1_9"/>
<dbReference type="UniPathway" id="UPA00664"/>
<dbReference type="Proteomes" id="UP000001415">
    <property type="component" value="Chromosome"/>
</dbReference>
<dbReference type="GO" id="GO:0005886">
    <property type="term" value="C:plasma membrane"/>
    <property type="evidence" value="ECO:0007669"/>
    <property type="project" value="UniProtKB-SubCell"/>
</dbReference>
<dbReference type="GO" id="GO:0008961">
    <property type="term" value="F:phosphatidylglycerol-prolipoprotein diacylglyceryl transferase activity"/>
    <property type="evidence" value="ECO:0007669"/>
    <property type="project" value="UniProtKB-UniRule"/>
</dbReference>
<dbReference type="GO" id="GO:0042158">
    <property type="term" value="P:lipoprotein biosynthetic process"/>
    <property type="evidence" value="ECO:0007669"/>
    <property type="project" value="UniProtKB-UniRule"/>
</dbReference>
<dbReference type="HAMAP" id="MF_01147">
    <property type="entry name" value="Lgt"/>
    <property type="match status" value="1"/>
</dbReference>
<dbReference type="InterPro" id="IPR001640">
    <property type="entry name" value="Lgt"/>
</dbReference>
<dbReference type="NCBIfam" id="TIGR00544">
    <property type="entry name" value="lgt"/>
    <property type="match status" value="1"/>
</dbReference>
<dbReference type="PANTHER" id="PTHR30589:SF0">
    <property type="entry name" value="PHOSPHATIDYLGLYCEROL--PROLIPOPROTEIN DIACYLGLYCERYL TRANSFERASE"/>
    <property type="match status" value="1"/>
</dbReference>
<dbReference type="PANTHER" id="PTHR30589">
    <property type="entry name" value="PROLIPOPROTEIN DIACYLGLYCERYL TRANSFERASE"/>
    <property type="match status" value="1"/>
</dbReference>
<dbReference type="Pfam" id="PF01790">
    <property type="entry name" value="LGT"/>
    <property type="match status" value="1"/>
</dbReference>
<dbReference type="PROSITE" id="PS01311">
    <property type="entry name" value="LGT"/>
    <property type="match status" value="1"/>
</dbReference>
<evidence type="ECO:0000255" key="1">
    <source>
        <dbReference type="HAMAP-Rule" id="MF_01147"/>
    </source>
</evidence>
<feature type="chain" id="PRO_0000172599" description="Phosphatidylglycerol--prolipoprotein diacylglyceryl transferase">
    <location>
        <begin position="1"/>
        <end position="278"/>
    </location>
</feature>
<feature type="transmembrane region" description="Helical" evidence="1">
    <location>
        <begin position="13"/>
        <end position="33"/>
    </location>
</feature>
<feature type="transmembrane region" description="Helical" evidence="1">
    <location>
        <begin position="50"/>
        <end position="70"/>
    </location>
</feature>
<feature type="transmembrane region" description="Helical" evidence="1">
    <location>
        <begin position="89"/>
        <end position="109"/>
    </location>
</feature>
<feature type="transmembrane region" description="Helical" evidence="1">
    <location>
        <begin position="175"/>
        <end position="195"/>
    </location>
</feature>
<feature type="transmembrane region" description="Helical" evidence="1">
    <location>
        <begin position="205"/>
        <end position="225"/>
    </location>
</feature>
<feature type="transmembrane region" description="Helical" evidence="1">
    <location>
        <begin position="236"/>
        <end position="256"/>
    </location>
</feature>
<feature type="binding site" evidence="1">
    <location>
        <position position="135"/>
    </location>
    <ligand>
        <name>a 1,2-diacyl-sn-glycero-3-phospho-(1'-sn-glycerol)</name>
        <dbReference type="ChEBI" id="CHEBI:64716"/>
    </ligand>
</feature>
<keyword id="KW-1003">Cell membrane</keyword>
<keyword id="KW-0472">Membrane</keyword>
<keyword id="KW-1185">Reference proteome</keyword>
<keyword id="KW-0808">Transferase</keyword>
<keyword id="KW-0812">Transmembrane</keyword>
<keyword id="KW-1133">Transmembrane helix</keyword>
<proteinExistence type="inferred from homology"/>